<dbReference type="EMBL" id="CP000812">
    <property type="protein sequence ID" value="ABV33144.1"/>
    <property type="molecule type" value="Genomic_DNA"/>
</dbReference>
<dbReference type="RefSeq" id="WP_012002625.1">
    <property type="nucleotide sequence ID" value="NZ_BSDV01000001.1"/>
</dbReference>
<dbReference type="SMR" id="A8F4R0"/>
<dbReference type="STRING" id="416591.Tlet_0578"/>
<dbReference type="KEGG" id="tle:Tlet_0578"/>
<dbReference type="eggNOG" id="COG0051">
    <property type="taxonomic scope" value="Bacteria"/>
</dbReference>
<dbReference type="HOGENOM" id="CLU_122625_1_3_0"/>
<dbReference type="OrthoDB" id="9804464at2"/>
<dbReference type="Proteomes" id="UP000002016">
    <property type="component" value="Chromosome"/>
</dbReference>
<dbReference type="GO" id="GO:1990904">
    <property type="term" value="C:ribonucleoprotein complex"/>
    <property type="evidence" value="ECO:0007669"/>
    <property type="project" value="UniProtKB-KW"/>
</dbReference>
<dbReference type="GO" id="GO:0005840">
    <property type="term" value="C:ribosome"/>
    <property type="evidence" value="ECO:0007669"/>
    <property type="project" value="UniProtKB-KW"/>
</dbReference>
<dbReference type="GO" id="GO:0003735">
    <property type="term" value="F:structural constituent of ribosome"/>
    <property type="evidence" value="ECO:0007669"/>
    <property type="project" value="InterPro"/>
</dbReference>
<dbReference type="GO" id="GO:0000049">
    <property type="term" value="F:tRNA binding"/>
    <property type="evidence" value="ECO:0007669"/>
    <property type="project" value="UniProtKB-UniRule"/>
</dbReference>
<dbReference type="GO" id="GO:0006412">
    <property type="term" value="P:translation"/>
    <property type="evidence" value="ECO:0007669"/>
    <property type="project" value="UniProtKB-UniRule"/>
</dbReference>
<dbReference type="FunFam" id="3.30.70.600:FF:000001">
    <property type="entry name" value="30S ribosomal protein S10"/>
    <property type="match status" value="1"/>
</dbReference>
<dbReference type="Gene3D" id="3.30.70.600">
    <property type="entry name" value="Ribosomal protein S10 domain"/>
    <property type="match status" value="1"/>
</dbReference>
<dbReference type="HAMAP" id="MF_00508">
    <property type="entry name" value="Ribosomal_uS10"/>
    <property type="match status" value="1"/>
</dbReference>
<dbReference type="InterPro" id="IPR001848">
    <property type="entry name" value="Ribosomal_uS10"/>
</dbReference>
<dbReference type="InterPro" id="IPR018268">
    <property type="entry name" value="Ribosomal_uS10_CS"/>
</dbReference>
<dbReference type="InterPro" id="IPR027486">
    <property type="entry name" value="Ribosomal_uS10_dom"/>
</dbReference>
<dbReference type="InterPro" id="IPR036838">
    <property type="entry name" value="Ribosomal_uS10_dom_sf"/>
</dbReference>
<dbReference type="NCBIfam" id="NF001861">
    <property type="entry name" value="PRK00596.1"/>
    <property type="match status" value="1"/>
</dbReference>
<dbReference type="NCBIfam" id="TIGR01049">
    <property type="entry name" value="rpsJ_bact"/>
    <property type="match status" value="1"/>
</dbReference>
<dbReference type="PANTHER" id="PTHR11700">
    <property type="entry name" value="30S RIBOSOMAL PROTEIN S10 FAMILY MEMBER"/>
    <property type="match status" value="1"/>
</dbReference>
<dbReference type="Pfam" id="PF00338">
    <property type="entry name" value="Ribosomal_S10"/>
    <property type="match status" value="1"/>
</dbReference>
<dbReference type="PRINTS" id="PR00971">
    <property type="entry name" value="RIBOSOMALS10"/>
</dbReference>
<dbReference type="SMART" id="SM01403">
    <property type="entry name" value="Ribosomal_S10"/>
    <property type="match status" value="1"/>
</dbReference>
<dbReference type="SUPFAM" id="SSF54999">
    <property type="entry name" value="Ribosomal protein S10"/>
    <property type="match status" value="1"/>
</dbReference>
<dbReference type="PROSITE" id="PS00361">
    <property type="entry name" value="RIBOSOMAL_S10"/>
    <property type="match status" value="1"/>
</dbReference>
<organism>
    <name type="scientific">Pseudothermotoga lettingae (strain ATCC BAA-301 / DSM 14385 / NBRC 107922 / TMO)</name>
    <name type="common">Thermotoga lettingae</name>
    <dbReference type="NCBI Taxonomy" id="416591"/>
    <lineage>
        <taxon>Bacteria</taxon>
        <taxon>Thermotogati</taxon>
        <taxon>Thermotogota</taxon>
        <taxon>Thermotogae</taxon>
        <taxon>Thermotogales</taxon>
        <taxon>Thermotogaceae</taxon>
        <taxon>Pseudothermotoga</taxon>
    </lineage>
</organism>
<protein>
    <recommendedName>
        <fullName evidence="1">Small ribosomal subunit protein uS10</fullName>
    </recommendedName>
    <alternativeName>
        <fullName evidence="2">30S ribosomal protein S10</fullName>
    </alternativeName>
</protein>
<evidence type="ECO:0000255" key="1">
    <source>
        <dbReference type="HAMAP-Rule" id="MF_00508"/>
    </source>
</evidence>
<evidence type="ECO:0000305" key="2"/>
<name>RS10_PSELT</name>
<proteinExistence type="inferred from homology"/>
<gene>
    <name evidence="1" type="primary">rpsJ</name>
    <name type="ordered locus">Tlet_0578</name>
</gene>
<accession>A8F4R0</accession>
<sequence length="102" mass="11570">MPGQKIRIKLKAYDHEVLDESAKKIVEVAKSTNAKISGPIPLPTERALYVVLRSPHKHKDSREQFEKRVHKRLIDIIEPSPKTIDALMKINLPAGVDVEIKL</sequence>
<feature type="chain" id="PRO_1000060864" description="Small ribosomal subunit protein uS10">
    <location>
        <begin position="1"/>
        <end position="102"/>
    </location>
</feature>
<comment type="function">
    <text evidence="1">Involved in the binding of tRNA to the ribosomes.</text>
</comment>
<comment type="subunit">
    <text evidence="1">Part of the 30S ribosomal subunit.</text>
</comment>
<comment type="similarity">
    <text evidence="1">Belongs to the universal ribosomal protein uS10 family.</text>
</comment>
<reference key="1">
    <citation type="submission" date="2007-08" db="EMBL/GenBank/DDBJ databases">
        <title>Complete sequence of Thermotoga lettingae TMO.</title>
        <authorList>
            <consortium name="US DOE Joint Genome Institute"/>
            <person name="Copeland A."/>
            <person name="Lucas S."/>
            <person name="Lapidus A."/>
            <person name="Barry K."/>
            <person name="Glavina del Rio T."/>
            <person name="Dalin E."/>
            <person name="Tice H."/>
            <person name="Pitluck S."/>
            <person name="Foster B."/>
            <person name="Bruce D."/>
            <person name="Schmutz J."/>
            <person name="Larimer F."/>
            <person name="Land M."/>
            <person name="Hauser L."/>
            <person name="Kyrpides N."/>
            <person name="Mikhailova N."/>
            <person name="Nelson K."/>
            <person name="Gogarten J.P."/>
            <person name="Noll K."/>
            <person name="Richardson P."/>
        </authorList>
    </citation>
    <scope>NUCLEOTIDE SEQUENCE [LARGE SCALE GENOMIC DNA]</scope>
    <source>
        <strain>ATCC BAA-301 / DSM 14385 / NBRC 107922 / TMO</strain>
    </source>
</reference>
<keyword id="KW-1185">Reference proteome</keyword>
<keyword id="KW-0687">Ribonucleoprotein</keyword>
<keyword id="KW-0689">Ribosomal protein</keyword>